<keyword id="KW-0878">Amphibian defense peptide</keyword>
<keyword id="KW-0903">Direct protein sequencing</keyword>
<keyword id="KW-1015">Disulfide bond</keyword>
<keyword id="KW-0339">Growth factor</keyword>
<keyword id="KW-0964">Secreted</keyword>
<keyword id="KW-0838">Vasoactive</keyword>
<keyword id="KW-0840">Vasodilator</keyword>
<evidence type="ECO:0000269" key="1">
    <source>
    </source>
</evidence>
<evidence type="ECO:0000269" key="2">
    <source>
    </source>
</evidence>
<evidence type="ECO:0000269" key="3">
    <source>
    </source>
</evidence>
<evidence type="ECO:0000303" key="4">
    <source>
    </source>
</evidence>
<evidence type="ECO:0000305" key="5"/>
<protein>
    <recommendedName>
        <fullName evidence="4">Signiferin-1</fullName>
    </recommendedName>
</protein>
<sequence>RLCIPYIIPC</sequence>
<proteinExistence type="evidence at protein level"/>
<organism>
    <name type="scientific">Crinia signifera</name>
    <name type="common">Common eastern froglet</name>
    <dbReference type="NCBI Taxonomy" id="326986"/>
    <lineage>
        <taxon>Eukaryota</taxon>
        <taxon>Metazoa</taxon>
        <taxon>Chordata</taxon>
        <taxon>Craniata</taxon>
        <taxon>Vertebrata</taxon>
        <taxon>Euteleostomi</taxon>
        <taxon>Amphibia</taxon>
        <taxon>Batrachia</taxon>
        <taxon>Anura</taxon>
        <taxon>Neobatrachia</taxon>
        <taxon>Myobatrachoidea</taxon>
        <taxon>Myobatrachidae</taxon>
        <taxon>Myobatrachinae</taxon>
        <taxon>Crinia</taxon>
    </lineage>
</organism>
<accession>P86130</accession>
<dbReference type="GO" id="GO:0005576">
    <property type="term" value="C:extracellular region"/>
    <property type="evidence" value="ECO:0000314"/>
    <property type="project" value="UniProtKB"/>
</dbReference>
<dbReference type="GO" id="GO:0008083">
    <property type="term" value="F:growth factor activity"/>
    <property type="evidence" value="ECO:0007669"/>
    <property type="project" value="UniProtKB-KW"/>
</dbReference>
<dbReference type="GO" id="GO:0006952">
    <property type="term" value="P:defense response"/>
    <property type="evidence" value="ECO:0007669"/>
    <property type="project" value="UniProtKB-KW"/>
</dbReference>
<dbReference type="GO" id="GO:0070665">
    <property type="term" value="P:positive regulation of leukocyte proliferation"/>
    <property type="evidence" value="ECO:0000314"/>
    <property type="project" value="UniProtKB"/>
</dbReference>
<dbReference type="GO" id="GO:0045987">
    <property type="term" value="P:positive regulation of smooth muscle contraction"/>
    <property type="evidence" value="ECO:0000314"/>
    <property type="project" value="UniProtKB"/>
</dbReference>
<dbReference type="GO" id="GO:0042311">
    <property type="term" value="P:vasodilation"/>
    <property type="evidence" value="ECO:0007669"/>
    <property type="project" value="UniProtKB-KW"/>
</dbReference>
<feature type="peptide" id="PRO_0000371739" description="Signiferin-1" evidence="1">
    <location>
        <begin position="1"/>
        <end position="10"/>
    </location>
</feature>
<feature type="disulfide bond" evidence="1 3">
    <location>
        <begin position="3"/>
        <end position="10"/>
    </location>
</feature>
<reference evidence="5" key="1">
    <citation type="journal article" date="2004" name="Rapid Commun. Mass Spectrom.">
        <title>Host-defence skin peptides of the Australian common froglet Crinia signifera: sequence determination using positive and negative ion electrospray mass spectra.</title>
        <authorList>
            <person name="Maselli V.M."/>
            <person name="Brinkworth C.S."/>
            <person name="Bowie J.H."/>
            <person name="Tyler M.J."/>
        </authorList>
    </citation>
    <scope>PROTEIN SEQUENCE</scope>
    <scope>SUBCELLULAR LOCATION</scope>
    <scope>TISSUE SPECIFICITY</scope>
    <scope>DISULFIDE BOND</scope>
    <source>
        <tissue evidence="1">Skin secretion</tissue>
    </source>
</reference>
<reference evidence="5" key="2">
    <citation type="journal article" date="2006" name="Rapid Commun. Mass Spectrom.">
        <title>Host-defence skin peptides of the Australian streambank froglet Crinia riparia: isolation and sequence determination by positive and negative ion electrospray mass spectrometry.</title>
        <authorList>
            <person name="Maselli V.M."/>
            <person name="Bilusich D."/>
            <person name="Bowie J.H."/>
            <person name="Tyler M.J."/>
        </authorList>
    </citation>
    <scope>FUNCTION</scope>
</reference>
<reference evidence="5" key="3">
    <citation type="journal article" date="2008" name="Regul. Pept.">
        <title>Disulfide-containing peptides from the glandular skin secretions of froglets of the genus Crinia: structure, activity and evolutionary trends.</title>
        <authorList>
            <person name="Jackway R.J."/>
            <person name="Pukala T.L."/>
            <person name="Maselli V.M."/>
            <person name="Musgrave I.F."/>
            <person name="Bowie J.H."/>
            <person name="Liu Y."/>
            <person name="Surinya-Johnson K.H."/>
            <person name="Donnellan S.C."/>
            <person name="Doyle J.R."/>
            <person name="Llewellyn L.E."/>
            <person name="Tyler M.J."/>
        </authorList>
    </citation>
    <scope>FUNCTION</scope>
    <scope>STRUCTURE BY NMR OF 1-10</scope>
    <scope>DISULFIDE BOND</scope>
    <scope>DISCUSSION OF SEQUENCE</scope>
</reference>
<name>SIG1_CRISI</name>
<comment type="function">
    <text evidence="2 3">Induces mouse splenocyte proliferation and guinea pig smooth muscle contraction through binding to CCK-BR.</text>
</comment>
<comment type="subcellular location">
    <subcellularLocation>
        <location evidence="1">Secreted</location>
    </subcellularLocation>
</comment>
<comment type="tissue specificity">
    <text evidence="1">Expressed by the skin glands.</text>
</comment>